<sequence>MARKPLIAGNWKMNLDHQQAIGTVQKLAFALPKEYFEKVDVAVTVPFTDIRSVQTLVEGDKLEVTFGAQDVSQHESGAYTGEVSASMLAKLNCSWVVVGHSERREYHNESDELVAAKAKAALSNGISPIVCVGEPLEIREAGTHVEYVVEQTRKSLAGLDAAELANTVIAYEPVWAIGTGKVASAADAQEVCKAIRGLIVELAGDEVAEGLRILYGGSVKAETVAEIVGQPDVDGGLVGGASLDGEAFAKLAANAASVA</sequence>
<gene>
    <name evidence="1" type="primary">tpiA</name>
    <name type="synonym">tpi</name>
    <name type="ordered locus">Cgl1586</name>
    <name type="ordered locus">cg1789</name>
</gene>
<feature type="chain" id="PRO_0000090214" description="Triosephosphate isomerase">
    <location>
        <begin position="1"/>
        <end position="259"/>
    </location>
</feature>
<feature type="active site" description="Electrophile" evidence="1">
    <location>
        <position position="100"/>
    </location>
</feature>
<feature type="active site" description="Proton acceptor" evidence="1">
    <location>
        <position position="172"/>
    </location>
</feature>
<feature type="binding site" evidence="1">
    <location>
        <begin position="10"/>
        <end position="12"/>
    </location>
    <ligand>
        <name>substrate</name>
    </ligand>
</feature>
<feature type="binding site" evidence="1">
    <location>
        <position position="178"/>
    </location>
    <ligand>
        <name>substrate</name>
    </ligand>
</feature>
<feature type="binding site" evidence="1">
    <location>
        <position position="218"/>
    </location>
    <ligand>
        <name>substrate</name>
    </ligand>
</feature>
<feature type="binding site" evidence="1">
    <location>
        <begin position="239"/>
        <end position="240"/>
    </location>
    <ligand>
        <name>substrate</name>
    </ligand>
</feature>
<feature type="sequence conflict" description="In Ref. 1 and 5." evidence="2" ref="1 5">
    <original>FA</original>
    <variation>LP</variation>
    <location>
        <begin position="248"/>
        <end position="249"/>
    </location>
</feature>
<dbReference type="EC" id="5.3.1.1" evidence="1"/>
<dbReference type="EMBL" id="X59403">
    <property type="protein sequence ID" value="CAA42047.1"/>
    <property type="molecule type" value="Genomic_DNA"/>
</dbReference>
<dbReference type="EMBL" id="BA000036">
    <property type="protein sequence ID" value="BAB98979.1"/>
    <property type="molecule type" value="Genomic_DNA"/>
</dbReference>
<dbReference type="EMBL" id="BX927152">
    <property type="protein sequence ID" value="CAF21594.1"/>
    <property type="molecule type" value="Genomic_DNA"/>
</dbReference>
<dbReference type="EMBL" id="M25819">
    <property type="protein sequence ID" value="AAA83536.1"/>
    <property type="molecule type" value="Genomic_DNA"/>
</dbReference>
<dbReference type="EMBL" id="X14234">
    <property type="status" value="NOT_ANNOTATED_CDS"/>
    <property type="molecule type" value="Genomic_DNA"/>
</dbReference>
<dbReference type="PIR" id="C43260">
    <property type="entry name" value="C43260"/>
</dbReference>
<dbReference type="RefSeq" id="NP_600800.1">
    <property type="nucleotide sequence ID" value="NC_003450.3"/>
</dbReference>
<dbReference type="RefSeq" id="WP_011014466.1">
    <property type="nucleotide sequence ID" value="NC_006958.1"/>
</dbReference>
<dbReference type="SMR" id="P19583"/>
<dbReference type="STRING" id="196627.cg1789"/>
<dbReference type="GeneID" id="1019554"/>
<dbReference type="KEGG" id="cgb:cg1789"/>
<dbReference type="KEGG" id="cgl:Cgl1586"/>
<dbReference type="PATRIC" id="fig|196627.13.peg.1548"/>
<dbReference type="eggNOG" id="COG0149">
    <property type="taxonomic scope" value="Bacteria"/>
</dbReference>
<dbReference type="HOGENOM" id="CLU_024251_2_3_11"/>
<dbReference type="OrthoDB" id="9809429at2"/>
<dbReference type="BioCyc" id="CORYNE:G18NG-11171-MONOMER"/>
<dbReference type="UniPathway" id="UPA00109">
    <property type="reaction ID" value="UER00189"/>
</dbReference>
<dbReference type="UniPathway" id="UPA00138"/>
<dbReference type="Proteomes" id="UP000000582">
    <property type="component" value="Chromosome"/>
</dbReference>
<dbReference type="Proteomes" id="UP000001009">
    <property type="component" value="Chromosome"/>
</dbReference>
<dbReference type="GO" id="GO:0005829">
    <property type="term" value="C:cytosol"/>
    <property type="evidence" value="ECO:0007669"/>
    <property type="project" value="TreeGrafter"/>
</dbReference>
<dbReference type="GO" id="GO:0004807">
    <property type="term" value="F:triose-phosphate isomerase activity"/>
    <property type="evidence" value="ECO:0007669"/>
    <property type="project" value="UniProtKB-UniRule"/>
</dbReference>
<dbReference type="GO" id="GO:0006094">
    <property type="term" value="P:gluconeogenesis"/>
    <property type="evidence" value="ECO:0007669"/>
    <property type="project" value="UniProtKB-UniRule"/>
</dbReference>
<dbReference type="GO" id="GO:0046166">
    <property type="term" value="P:glyceraldehyde-3-phosphate biosynthetic process"/>
    <property type="evidence" value="ECO:0007669"/>
    <property type="project" value="TreeGrafter"/>
</dbReference>
<dbReference type="GO" id="GO:0019563">
    <property type="term" value="P:glycerol catabolic process"/>
    <property type="evidence" value="ECO:0007669"/>
    <property type="project" value="TreeGrafter"/>
</dbReference>
<dbReference type="GO" id="GO:0006096">
    <property type="term" value="P:glycolytic process"/>
    <property type="evidence" value="ECO:0007669"/>
    <property type="project" value="UniProtKB-UniRule"/>
</dbReference>
<dbReference type="CDD" id="cd00311">
    <property type="entry name" value="TIM"/>
    <property type="match status" value="1"/>
</dbReference>
<dbReference type="FunFam" id="3.20.20.70:FF:000020">
    <property type="entry name" value="Triosephosphate isomerase"/>
    <property type="match status" value="1"/>
</dbReference>
<dbReference type="Gene3D" id="3.20.20.70">
    <property type="entry name" value="Aldolase class I"/>
    <property type="match status" value="1"/>
</dbReference>
<dbReference type="HAMAP" id="MF_00147_B">
    <property type="entry name" value="TIM_B"/>
    <property type="match status" value="1"/>
</dbReference>
<dbReference type="InterPro" id="IPR013785">
    <property type="entry name" value="Aldolase_TIM"/>
</dbReference>
<dbReference type="InterPro" id="IPR035990">
    <property type="entry name" value="TIM_sf"/>
</dbReference>
<dbReference type="InterPro" id="IPR022896">
    <property type="entry name" value="TrioseP_Isoase_bac/euk"/>
</dbReference>
<dbReference type="InterPro" id="IPR000652">
    <property type="entry name" value="Triosephosphate_isomerase"/>
</dbReference>
<dbReference type="InterPro" id="IPR020861">
    <property type="entry name" value="Triosephosphate_isomerase_AS"/>
</dbReference>
<dbReference type="NCBIfam" id="TIGR00419">
    <property type="entry name" value="tim"/>
    <property type="match status" value="1"/>
</dbReference>
<dbReference type="PANTHER" id="PTHR21139">
    <property type="entry name" value="TRIOSEPHOSPHATE ISOMERASE"/>
    <property type="match status" value="1"/>
</dbReference>
<dbReference type="PANTHER" id="PTHR21139:SF42">
    <property type="entry name" value="TRIOSEPHOSPHATE ISOMERASE"/>
    <property type="match status" value="1"/>
</dbReference>
<dbReference type="Pfam" id="PF00121">
    <property type="entry name" value="TIM"/>
    <property type="match status" value="1"/>
</dbReference>
<dbReference type="SUPFAM" id="SSF51351">
    <property type="entry name" value="Triosephosphate isomerase (TIM)"/>
    <property type="match status" value="1"/>
</dbReference>
<dbReference type="PROSITE" id="PS00171">
    <property type="entry name" value="TIM_1"/>
    <property type="match status" value="1"/>
</dbReference>
<dbReference type="PROSITE" id="PS51440">
    <property type="entry name" value="TIM_2"/>
    <property type="match status" value="1"/>
</dbReference>
<comment type="function">
    <text evidence="1">Involved in the gluconeogenesis. Catalyzes stereospecifically the conversion of dihydroxyacetone phosphate (DHAP) to D-glyceraldehyde-3-phosphate (G3P).</text>
</comment>
<comment type="catalytic activity">
    <reaction evidence="1">
        <text>D-glyceraldehyde 3-phosphate = dihydroxyacetone phosphate</text>
        <dbReference type="Rhea" id="RHEA:18585"/>
        <dbReference type="ChEBI" id="CHEBI:57642"/>
        <dbReference type="ChEBI" id="CHEBI:59776"/>
        <dbReference type="EC" id="5.3.1.1"/>
    </reaction>
</comment>
<comment type="pathway">
    <text evidence="1">Carbohydrate biosynthesis; gluconeogenesis.</text>
</comment>
<comment type="pathway">
    <text evidence="1">Carbohydrate degradation; glycolysis; D-glyceraldehyde 3-phosphate from glycerone phosphate: step 1/1.</text>
</comment>
<comment type="subunit">
    <text evidence="1">Homodimer.</text>
</comment>
<comment type="subcellular location">
    <subcellularLocation>
        <location evidence="1">Cytoplasm</location>
    </subcellularLocation>
</comment>
<comment type="similarity">
    <text evidence="1">Belongs to the triosephosphate isomerase family.</text>
</comment>
<protein>
    <recommendedName>
        <fullName evidence="1">Triosephosphate isomerase</fullName>
        <shortName evidence="1">TIM</shortName>
        <shortName evidence="1">TPI</shortName>
        <ecNumber evidence="1">5.3.1.1</ecNumber>
    </recommendedName>
    <alternativeName>
        <fullName evidence="1">Triose-phosphate isomerase</fullName>
    </alternativeName>
</protein>
<accession>P19583</accession>
<accession>Q59287</accession>
<organism>
    <name type="scientific">Corynebacterium glutamicum (strain ATCC 13032 / DSM 20300 / JCM 1318 / BCRC 11384 / CCUG 27702 / LMG 3730 / NBRC 12168 / NCIMB 10025 / NRRL B-2784 / 534)</name>
    <dbReference type="NCBI Taxonomy" id="196627"/>
    <lineage>
        <taxon>Bacteria</taxon>
        <taxon>Bacillati</taxon>
        <taxon>Actinomycetota</taxon>
        <taxon>Actinomycetes</taxon>
        <taxon>Mycobacteriales</taxon>
        <taxon>Corynebacteriaceae</taxon>
        <taxon>Corynebacterium</taxon>
    </lineage>
</organism>
<evidence type="ECO:0000255" key="1">
    <source>
        <dbReference type="HAMAP-Rule" id="MF_00147"/>
    </source>
</evidence>
<evidence type="ECO:0000305" key="2"/>
<proteinExistence type="inferred from homology"/>
<reference key="1">
    <citation type="journal article" date="1992" name="J. Bacteriol.">
        <title>Identification, sequence analysis, and expression of a Corynebacterium glutamicum gene cluster encoding the three glycolytic enzymes glyceraldehyde-3-phosphate dehydrogenase, 3-phosphoglycerate kinase, and triosephosphate isomerase.</title>
        <authorList>
            <person name="Eikmanns B.J."/>
        </authorList>
    </citation>
    <scope>NUCLEOTIDE SEQUENCE [GENOMIC DNA]</scope>
    <source>
        <strain>ATCC 13059 / LMG 3658 / NCIB 10332 / AS019 / 613</strain>
    </source>
</reference>
<reference key="2">
    <citation type="journal article" date="2003" name="Appl. Microbiol. Biotechnol.">
        <title>The Corynebacterium glutamicum genome: features and impacts on biotechnological processes.</title>
        <authorList>
            <person name="Ikeda M."/>
            <person name="Nakagawa S."/>
        </authorList>
    </citation>
    <scope>NUCLEOTIDE SEQUENCE [LARGE SCALE GENOMIC DNA]</scope>
    <source>
        <strain>ATCC 13032 / DSM 20300 / JCM 1318 / BCRC 11384 / CCUG 27702 / LMG 3730 / NBRC 12168 / NCIMB 10025 / NRRL B-2784 / 534</strain>
    </source>
</reference>
<reference key="3">
    <citation type="journal article" date="2003" name="J. Biotechnol.">
        <title>The complete Corynebacterium glutamicum ATCC 13032 genome sequence and its impact on the production of L-aspartate-derived amino acids and vitamins.</title>
        <authorList>
            <person name="Kalinowski J."/>
            <person name="Bathe B."/>
            <person name="Bartels D."/>
            <person name="Bischoff N."/>
            <person name="Bott M."/>
            <person name="Burkovski A."/>
            <person name="Dusch N."/>
            <person name="Eggeling L."/>
            <person name="Eikmanns B.J."/>
            <person name="Gaigalat L."/>
            <person name="Goesmann A."/>
            <person name="Hartmann M."/>
            <person name="Huthmacher K."/>
            <person name="Kraemer R."/>
            <person name="Linke B."/>
            <person name="McHardy A.C."/>
            <person name="Meyer F."/>
            <person name="Moeckel B."/>
            <person name="Pfefferle W."/>
            <person name="Puehler A."/>
            <person name="Rey D.A."/>
            <person name="Rueckert C."/>
            <person name="Rupp O."/>
            <person name="Sahm H."/>
            <person name="Wendisch V.F."/>
            <person name="Wiegraebe I."/>
            <person name="Tauch A."/>
        </authorList>
    </citation>
    <scope>NUCLEOTIDE SEQUENCE [LARGE SCALE GENOMIC DNA]</scope>
    <source>
        <strain>ATCC 13032 / DSM 20300 / JCM 1318 / BCRC 11384 / CCUG 27702 / LMG 3730 / NBRC 12168 / NCIMB 10025 / NRRL B-2784 / 534</strain>
    </source>
</reference>
<reference key="4">
    <citation type="journal article" date="1989" name="Gene">
        <title>Cloning and nucleotide sequence of the phosphoenolpyruvate carboxylase-coding gene of Corynebacterium glutamicum ATCC13032.</title>
        <authorList>
            <person name="O'Regan M."/>
            <person name="Thierbach G."/>
            <person name="Bachmann B."/>
            <person name="Villeval D."/>
            <person name="Lepage P."/>
            <person name="Viret J.F."/>
            <person name="Lemoine Y."/>
        </authorList>
    </citation>
    <scope>NUCLEOTIDE SEQUENCE [GENOMIC DNA] OF 16-259</scope>
    <source>
        <strain>ATCC 13032 / DSM 20300 / JCM 1318 / BCRC 11384 / CCUG 27702 / LMG 3730 / NBRC 12168 / NCIMB 10025 / NRRL B-2784 / 534</strain>
    </source>
</reference>
<reference key="5">
    <citation type="journal article" date="1989" name="Mol. Gen. Genet.">
        <title>The phosphoenolpyruvate carboxylase gene of Corynebacterium glutamicum: molecular cloning, nucleotide sequence, and expression.</title>
        <authorList>
            <person name="Eikmanns B.J."/>
            <person name="Follettie M.T."/>
            <person name="Griot M.U."/>
            <person name="Sinskey A.J."/>
        </authorList>
    </citation>
    <scope>NUCLEOTIDE SEQUENCE [GENOMIC DNA] OF 233-259</scope>
    <source>
        <strain>ATCC 13059 / LMG 3658 / NCIB 10332 / AS019 / 613</strain>
    </source>
</reference>
<keyword id="KW-0963">Cytoplasm</keyword>
<keyword id="KW-0312">Gluconeogenesis</keyword>
<keyword id="KW-0324">Glycolysis</keyword>
<keyword id="KW-0413">Isomerase</keyword>
<keyword id="KW-1185">Reference proteome</keyword>
<name>TPIS_CORGL</name>